<dbReference type="EMBL" id="CP000736">
    <property type="protein sequence ID" value="ABR53118.1"/>
    <property type="molecule type" value="Genomic_DNA"/>
</dbReference>
<dbReference type="SMR" id="A6U3V0"/>
<dbReference type="KEGG" id="sah:SaurJH1_2293"/>
<dbReference type="HOGENOM" id="CLU_072439_5_0_9"/>
<dbReference type="GO" id="GO:1990904">
    <property type="term" value="C:ribonucleoprotein complex"/>
    <property type="evidence" value="ECO:0007669"/>
    <property type="project" value="UniProtKB-KW"/>
</dbReference>
<dbReference type="GO" id="GO:0005840">
    <property type="term" value="C:ribosome"/>
    <property type="evidence" value="ECO:0007669"/>
    <property type="project" value="UniProtKB-KW"/>
</dbReference>
<dbReference type="GO" id="GO:0019843">
    <property type="term" value="F:rRNA binding"/>
    <property type="evidence" value="ECO:0007669"/>
    <property type="project" value="UniProtKB-UniRule"/>
</dbReference>
<dbReference type="GO" id="GO:0003735">
    <property type="term" value="F:structural constituent of ribosome"/>
    <property type="evidence" value="ECO:0007669"/>
    <property type="project" value="InterPro"/>
</dbReference>
<dbReference type="GO" id="GO:0006412">
    <property type="term" value="P:translation"/>
    <property type="evidence" value="ECO:0007669"/>
    <property type="project" value="UniProtKB-UniRule"/>
</dbReference>
<dbReference type="FunFam" id="3.30.420.80:FF:000001">
    <property type="entry name" value="30S ribosomal protein S11"/>
    <property type="match status" value="1"/>
</dbReference>
<dbReference type="Gene3D" id="3.30.420.80">
    <property type="entry name" value="Ribosomal protein S11"/>
    <property type="match status" value="1"/>
</dbReference>
<dbReference type="HAMAP" id="MF_01310">
    <property type="entry name" value="Ribosomal_uS11"/>
    <property type="match status" value="1"/>
</dbReference>
<dbReference type="InterPro" id="IPR001971">
    <property type="entry name" value="Ribosomal_uS11"/>
</dbReference>
<dbReference type="InterPro" id="IPR019981">
    <property type="entry name" value="Ribosomal_uS11_bac-type"/>
</dbReference>
<dbReference type="InterPro" id="IPR018102">
    <property type="entry name" value="Ribosomal_uS11_CS"/>
</dbReference>
<dbReference type="InterPro" id="IPR036967">
    <property type="entry name" value="Ribosomal_uS11_sf"/>
</dbReference>
<dbReference type="NCBIfam" id="NF003698">
    <property type="entry name" value="PRK05309.1"/>
    <property type="match status" value="1"/>
</dbReference>
<dbReference type="NCBIfam" id="TIGR03632">
    <property type="entry name" value="uS11_bact"/>
    <property type="match status" value="1"/>
</dbReference>
<dbReference type="PANTHER" id="PTHR11759">
    <property type="entry name" value="40S RIBOSOMAL PROTEIN S14/30S RIBOSOMAL PROTEIN S11"/>
    <property type="match status" value="1"/>
</dbReference>
<dbReference type="Pfam" id="PF00411">
    <property type="entry name" value="Ribosomal_S11"/>
    <property type="match status" value="1"/>
</dbReference>
<dbReference type="PIRSF" id="PIRSF002131">
    <property type="entry name" value="Ribosomal_S11"/>
    <property type="match status" value="1"/>
</dbReference>
<dbReference type="SUPFAM" id="SSF53137">
    <property type="entry name" value="Translational machinery components"/>
    <property type="match status" value="1"/>
</dbReference>
<dbReference type="PROSITE" id="PS00054">
    <property type="entry name" value="RIBOSOMAL_S11"/>
    <property type="match status" value="1"/>
</dbReference>
<sequence length="129" mass="13882">MARKQVSRKRRVKKNIENGVAHIRSTFNNTIVTITDEFGNALSWSSAGALGFKGSKKSTPFAAQMASETASKSAMEHGLKTVEVTVKGPGPGRESAIRALQSAGLEVTAIRDVTPVPHNGCRPPKRRRV</sequence>
<gene>
    <name evidence="1" type="primary">rpsK</name>
    <name type="ordered locus">SaurJH1_2293</name>
</gene>
<feature type="chain" id="PRO_1000086214" description="Small ribosomal subunit protein uS11">
    <location>
        <begin position="1"/>
        <end position="129"/>
    </location>
</feature>
<organism>
    <name type="scientific">Staphylococcus aureus (strain JH1)</name>
    <dbReference type="NCBI Taxonomy" id="359787"/>
    <lineage>
        <taxon>Bacteria</taxon>
        <taxon>Bacillati</taxon>
        <taxon>Bacillota</taxon>
        <taxon>Bacilli</taxon>
        <taxon>Bacillales</taxon>
        <taxon>Staphylococcaceae</taxon>
        <taxon>Staphylococcus</taxon>
    </lineage>
</organism>
<protein>
    <recommendedName>
        <fullName evidence="1">Small ribosomal subunit protein uS11</fullName>
    </recommendedName>
    <alternativeName>
        <fullName evidence="2">30S ribosomal protein S11</fullName>
    </alternativeName>
</protein>
<evidence type="ECO:0000255" key="1">
    <source>
        <dbReference type="HAMAP-Rule" id="MF_01310"/>
    </source>
</evidence>
<evidence type="ECO:0000305" key="2"/>
<keyword id="KW-0687">Ribonucleoprotein</keyword>
<keyword id="KW-0689">Ribosomal protein</keyword>
<keyword id="KW-0694">RNA-binding</keyword>
<keyword id="KW-0699">rRNA-binding</keyword>
<accession>A6U3V0</accession>
<reference key="1">
    <citation type="submission" date="2007-06" db="EMBL/GenBank/DDBJ databases">
        <title>Complete sequence of chromosome of Staphylococcus aureus subsp. aureus JH1.</title>
        <authorList>
            <consortium name="US DOE Joint Genome Institute"/>
            <person name="Copeland A."/>
            <person name="Lucas S."/>
            <person name="Lapidus A."/>
            <person name="Barry K."/>
            <person name="Detter J.C."/>
            <person name="Glavina del Rio T."/>
            <person name="Hammon N."/>
            <person name="Israni S."/>
            <person name="Dalin E."/>
            <person name="Tice H."/>
            <person name="Pitluck S."/>
            <person name="Chain P."/>
            <person name="Malfatti S."/>
            <person name="Shin M."/>
            <person name="Vergez L."/>
            <person name="Schmutz J."/>
            <person name="Larimer F."/>
            <person name="Land M."/>
            <person name="Hauser L."/>
            <person name="Kyrpides N."/>
            <person name="Ivanova N."/>
            <person name="Tomasz A."/>
            <person name="Richardson P."/>
        </authorList>
    </citation>
    <scope>NUCLEOTIDE SEQUENCE [LARGE SCALE GENOMIC DNA]</scope>
    <source>
        <strain>JH1</strain>
    </source>
</reference>
<proteinExistence type="inferred from homology"/>
<comment type="function">
    <text evidence="1">Located on the platform of the 30S subunit, it bridges several disparate RNA helices of the 16S rRNA. Forms part of the Shine-Dalgarno cleft in the 70S ribosome.</text>
</comment>
<comment type="subunit">
    <text evidence="1">Part of the 30S ribosomal subunit. Interacts with proteins S7 and S18. Binds to IF-3.</text>
</comment>
<comment type="similarity">
    <text evidence="1">Belongs to the universal ribosomal protein uS11 family.</text>
</comment>
<name>RS11_STAA2</name>